<name>MDTD_ECOL6</name>
<evidence type="ECO:0000255" key="1">
    <source>
        <dbReference type="HAMAP-Rule" id="MF_01577"/>
    </source>
</evidence>
<organism>
    <name type="scientific">Escherichia coli O6:H1 (strain CFT073 / ATCC 700928 / UPEC)</name>
    <dbReference type="NCBI Taxonomy" id="199310"/>
    <lineage>
        <taxon>Bacteria</taxon>
        <taxon>Pseudomonadati</taxon>
        <taxon>Pseudomonadota</taxon>
        <taxon>Gammaproteobacteria</taxon>
        <taxon>Enterobacterales</taxon>
        <taxon>Enterobacteriaceae</taxon>
        <taxon>Escherichia</taxon>
    </lineage>
</organism>
<reference key="1">
    <citation type="journal article" date="2002" name="Proc. Natl. Acad. Sci. U.S.A.">
        <title>Extensive mosaic structure revealed by the complete genome sequence of uropathogenic Escherichia coli.</title>
        <authorList>
            <person name="Welch R.A."/>
            <person name="Burland V."/>
            <person name="Plunkett G. III"/>
            <person name="Redford P."/>
            <person name="Roesch P."/>
            <person name="Rasko D."/>
            <person name="Buckles E.L."/>
            <person name="Liou S.-R."/>
            <person name="Boutin A."/>
            <person name="Hackett J."/>
            <person name="Stroud D."/>
            <person name="Mayhew G.F."/>
            <person name="Rose D.J."/>
            <person name="Zhou S."/>
            <person name="Schwartz D.C."/>
            <person name="Perna N.T."/>
            <person name="Mobley H.L.T."/>
            <person name="Donnenberg M.S."/>
            <person name="Blattner F.R."/>
        </authorList>
    </citation>
    <scope>NUCLEOTIDE SEQUENCE [LARGE SCALE GENOMIC DNA]</scope>
    <source>
        <strain>CFT073 / ATCC 700928 / UPEC</strain>
    </source>
</reference>
<proteinExistence type="inferred from homology"/>
<keyword id="KW-0997">Cell inner membrane</keyword>
<keyword id="KW-1003">Cell membrane</keyword>
<keyword id="KW-0472">Membrane</keyword>
<keyword id="KW-1185">Reference proteome</keyword>
<keyword id="KW-0812">Transmembrane</keyword>
<keyword id="KW-1133">Transmembrane helix</keyword>
<keyword id="KW-0813">Transport</keyword>
<gene>
    <name evidence="1" type="primary">mdtD</name>
    <name type="ordered locus">c2603</name>
</gene>
<feature type="chain" id="PRO_0000268593" description="Putative multidrug resistance protein MdtD">
    <location>
        <begin position="1"/>
        <end position="471"/>
    </location>
</feature>
<feature type="topological domain" description="Periplasmic" evidence="1">
    <location>
        <begin position="1"/>
        <end position="11"/>
    </location>
</feature>
<feature type="transmembrane region" description="Helical" evidence="1">
    <location>
        <begin position="12"/>
        <end position="32"/>
    </location>
</feature>
<feature type="topological domain" description="Cytoplasmic" evidence="1">
    <location>
        <begin position="33"/>
        <end position="48"/>
    </location>
</feature>
<feature type="transmembrane region" description="Helical" evidence="1">
    <location>
        <begin position="49"/>
        <end position="69"/>
    </location>
</feature>
<feature type="topological domain" description="Periplasmic" evidence="1">
    <location>
        <begin position="70"/>
        <end position="76"/>
    </location>
</feature>
<feature type="transmembrane region" description="Helical" evidence="1">
    <location>
        <begin position="77"/>
        <end position="97"/>
    </location>
</feature>
<feature type="topological domain" description="Cytoplasmic" evidence="1">
    <location>
        <begin position="98"/>
        <end position="101"/>
    </location>
</feature>
<feature type="transmembrane region" description="Helical" evidence="1">
    <location>
        <begin position="102"/>
        <end position="124"/>
    </location>
</feature>
<feature type="topological domain" description="Periplasmic" evidence="1">
    <location>
        <begin position="125"/>
        <end position="137"/>
    </location>
</feature>
<feature type="transmembrane region" description="Helical" evidence="1">
    <location>
        <begin position="138"/>
        <end position="158"/>
    </location>
</feature>
<feature type="topological domain" description="Cytoplasmic" evidence="1">
    <location>
        <begin position="159"/>
        <end position="164"/>
    </location>
</feature>
<feature type="transmembrane region" description="Helical" evidence="1">
    <location>
        <begin position="165"/>
        <end position="185"/>
    </location>
</feature>
<feature type="topological domain" description="Periplasmic" evidence="1">
    <location>
        <begin position="186"/>
        <end position="196"/>
    </location>
</feature>
<feature type="transmembrane region" description="Helical" evidence="1">
    <location>
        <begin position="197"/>
        <end position="217"/>
    </location>
</feature>
<feature type="topological domain" description="Cytoplasmic" evidence="1">
    <location>
        <begin position="218"/>
        <end position="224"/>
    </location>
</feature>
<feature type="transmembrane region" description="Helical" evidence="1">
    <location>
        <begin position="225"/>
        <end position="245"/>
    </location>
</feature>
<feature type="topological domain" description="Periplasmic" evidence="1">
    <location>
        <begin position="246"/>
        <end position="262"/>
    </location>
</feature>
<feature type="transmembrane region" description="Helical" evidence="1">
    <location>
        <begin position="263"/>
        <end position="283"/>
    </location>
</feature>
<feature type="topological domain" description="Cytoplasmic" evidence="1">
    <location>
        <begin position="284"/>
        <end position="285"/>
    </location>
</feature>
<feature type="transmembrane region" description="Helical" evidence="1">
    <location>
        <begin position="286"/>
        <end position="306"/>
    </location>
</feature>
<feature type="topological domain" description="Periplasmic" evidence="1">
    <location>
        <begin position="307"/>
        <end position="341"/>
    </location>
</feature>
<feature type="transmembrane region" description="Helical" evidence="1">
    <location>
        <begin position="342"/>
        <end position="362"/>
    </location>
</feature>
<feature type="topological domain" description="Cytoplasmic" evidence="1">
    <location>
        <begin position="363"/>
        <end position="395"/>
    </location>
</feature>
<feature type="transmembrane region" description="Helical" evidence="1">
    <location>
        <begin position="396"/>
        <end position="416"/>
    </location>
</feature>
<feature type="topological domain" description="Periplasmic" evidence="1">
    <location>
        <begin position="417"/>
        <end position="430"/>
    </location>
</feature>
<feature type="transmembrane region" description="Helical" evidence="1">
    <location>
        <begin position="431"/>
        <end position="451"/>
    </location>
</feature>
<feature type="topological domain" description="Cytoplasmic" evidence="1">
    <location>
        <begin position="452"/>
        <end position="471"/>
    </location>
</feature>
<dbReference type="EMBL" id="AE014075">
    <property type="protein sequence ID" value="AAN81059.1"/>
    <property type="molecule type" value="Genomic_DNA"/>
</dbReference>
<dbReference type="RefSeq" id="WP_000130831.1">
    <property type="nucleotide sequence ID" value="NZ_CP051263.1"/>
</dbReference>
<dbReference type="SMR" id="Q8FG02"/>
<dbReference type="STRING" id="199310.c2603"/>
<dbReference type="KEGG" id="ecc:c2603"/>
<dbReference type="eggNOG" id="COG2814">
    <property type="taxonomic scope" value="Bacteria"/>
</dbReference>
<dbReference type="HOGENOM" id="CLU_000960_28_0_6"/>
<dbReference type="BioCyc" id="ECOL199310:C2603-MONOMER"/>
<dbReference type="Proteomes" id="UP000001410">
    <property type="component" value="Chromosome"/>
</dbReference>
<dbReference type="GO" id="GO:0005886">
    <property type="term" value="C:plasma membrane"/>
    <property type="evidence" value="ECO:0007669"/>
    <property type="project" value="UniProtKB-SubCell"/>
</dbReference>
<dbReference type="GO" id="GO:0022857">
    <property type="term" value="F:transmembrane transporter activity"/>
    <property type="evidence" value="ECO:0007669"/>
    <property type="project" value="UniProtKB-UniRule"/>
</dbReference>
<dbReference type="CDD" id="cd17503">
    <property type="entry name" value="MFS_LmrB_MDR_like"/>
    <property type="match status" value="1"/>
</dbReference>
<dbReference type="FunFam" id="1.20.1250.20:FF:000021">
    <property type="entry name" value="Putative multidrug resistance protein MdtD"/>
    <property type="match status" value="1"/>
</dbReference>
<dbReference type="FunFam" id="1.20.1720.10:FF:000001">
    <property type="entry name" value="Putative multidrug resistance protein MdtD"/>
    <property type="match status" value="1"/>
</dbReference>
<dbReference type="Gene3D" id="1.20.1250.20">
    <property type="entry name" value="MFS general substrate transporter like domains"/>
    <property type="match status" value="1"/>
</dbReference>
<dbReference type="Gene3D" id="1.20.1720.10">
    <property type="entry name" value="Multidrug resistance protein D"/>
    <property type="match status" value="1"/>
</dbReference>
<dbReference type="HAMAP" id="MF_01577">
    <property type="entry name" value="MFS_MdtD"/>
    <property type="match status" value="1"/>
</dbReference>
<dbReference type="InterPro" id="IPR004638">
    <property type="entry name" value="EmrB-like"/>
</dbReference>
<dbReference type="InterPro" id="IPR011701">
    <property type="entry name" value="MFS"/>
</dbReference>
<dbReference type="InterPro" id="IPR020846">
    <property type="entry name" value="MFS_dom"/>
</dbReference>
<dbReference type="InterPro" id="IPR036259">
    <property type="entry name" value="MFS_trans_sf"/>
</dbReference>
<dbReference type="InterPro" id="IPR023721">
    <property type="entry name" value="Multi-R_MdtD"/>
</dbReference>
<dbReference type="NCBIfam" id="TIGR00711">
    <property type="entry name" value="efflux_EmrB"/>
    <property type="match status" value="1"/>
</dbReference>
<dbReference type="NCBIfam" id="NF007799">
    <property type="entry name" value="PRK10504.1"/>
    <property type="match status" value="1"/>
</dbReference>
<dbReference type="PANTHER" id="PTHR42718:SF46">
    <property type="entry name" value="BLR6921 PROTEIN"/>
    <property type="match status" value="1"/>
</dbReference>
<dbReference type="PANTHER" id="PTHR42718">
    <property type="entry name" value="MAJOR FACILITATOR SUPERFAMILY MULTIDRUG TRANSPORTER MFSC"/>
    <property type="match status" value="1"/>
</dbReference>
<dbReference type="Pfam" id="PF07690">
    <property type="entry name" value="MFS_1"/>
    <property type="match status" value="1"/>
</dbReference>
<dbReference type="PRINTS" id="PR01036">
    <property type="entry name" value="TCRTETB"/>
</dbReference>
<dbReference type="SUPFAM" id="SSF103473">
    <property type="entry name" value="MFS general substrate transporter"/>
    <property type="match status" value="1"/>
</dbReference>
<dbReference type="PROSITE" id="PS50850">
    <property type="entry name" value="MFS"/>
    <property type="match status" value="1"/>
</dbReference>
<accession>Q8FG02</accession>
<comment type="subcellular location">
    <subcellularLocation>
        <location evidence="1">Cell inner membrane</location>
        <topology evidence="1">Multi-pass membrane protein</topology>
    </subcellularLocation>
</comment>
<comment type="similarity">
    <text evidence="1">Belongs to the major facilitator superfamily. TCR/Tet family.</text>
</comment>
<sequence length="471" mass="50947">MTDLPDSTRWQLWIVAFGFFMQSLDTTIVNTALPSMAQSLGESPLHMHMVIVSYVLTVAVMLPASGWLADKVGVRNIFFTAIVLFTLGSLFCALSGTLNELLLARALQGVGGAMMVPVGRLTVMKIVPREQYMAAMTFVTLPGQIGPLLGPALGGLLVEYASWHWIFLINIPVGIIGAITTLMLMPNYTMQTRRFDLSGFLLLAVGMAVLTLALDGSKGTGFSPLAIAGLVAVGVVALVLYLLHAQNNNRALFSLKLFRTRTFSLGLAGSFAGRIGSGMLPFMTPVFLQIGFGFSPFHAGLMMIPMVLGSMGMKRIVVQVVNRFGYRRVLVATTLGLSLVTLLFMTTALLGWYYVLPFVLFLQGMVNSTRFSSMNTLTLKDLPDNLASSGNSLLSMIMQLSMSIGVTIAGLLLGLFGSQHVSVDSGTTQTVFMYTWLSMASIIALPAFIFARVPNDTHQNVAISRRKRSAQ</sequence>
<protein>
    <recommendedName>
        <fullName evidence="1">Putative multidrug resistance protein MdtD</fullName>
    </recommendedName>
</protein>